<accession>B7UPH5</accession>
<evidence type="ECO:0000255" key="1">
    <source>
        <dbReference type="HAMAP-Rule" id="MF_00510"/>
    </source>
</evidence>
<comment type="function">
    <text evidence="1">Hydrolyzes dipeptides containing N-terminal aspartate residues. May play a role in allowing the cell to use peptide aspartate to spare carbon otherwise required for the synthesis of the aspartate family of amino acids.</text>
</comment>
<comment type="catalytic activity">
    <reaction evidence="1">
        <text>Dipeptidase E catalyzes the hydrolysis of dipeptides Asp-|-Xaa. It does not act on peptides with N-terminal Glu, Asn or Gln, nor does it cleave isoaspartyl peptides.</text>
        <dbReference type="EC" id="3.4.13.21"/>
    </reaction>
</comment>
<comment type="subcellular location">
    <subcellularLocation>
        <location evidence="1">Cytoplasm</location>
    </subcellularLocation>
</comment>
<comment type="similarity">
    <text evidence="1">Belongs to the peptidase S51 family.</text>
</comment>
<gene>
    <name evidence="1" type="primary">pepE</name>
    <name type="ordered locus">E2348C_4329</name>
</gene>
<feature type="chain" id="PRO_1000146095" description="Peptidase E">
    <location>
        <begin position="1"/>
        <end position="229"/>
    </location>
</feature>
<feature type="active site" description="Charge relay system" evidence="1">
    <location>
        <position position="120"/>
    </location>
</feature>
<feature type="active site" description="Charge relay system" evidence="1">
    <location>
        <position position="135"/>
    </location>
</feature>
<feature type="active site" description="Charge relay system" evidence="1">
    <location>
        <position position="157"/>
    </location>
</feature>
<organism>
    <name type="scientific">Escherichia coli O127:H6 (strain E2348/69 / EPEC)</name>
    <dbReference type="NCBI Taxonomy" id="574521"/>
    <lineage>
        <taxon>Bacteria</taxon>
        <taxon>Pseudomonadati</taxon>
        <taxon>Pseudomonadota</taxon>
        <taxon>Gammaproteobacteria</taxon>
        <taxon>Enterobacterales</taxon>
        <taxon>Enterobacteriaceae</taxon>
        <taxon>Escherichia</taxon>
    </lineage>
</organism>
<reference key="1">
    <citation type="journal article" date="2009" name="J. Bacteriol.">
        <title>Complete genome sequence and comparative genome analysis of enteropathogenic Escherichia coli O127:H6 strain E2348/69.</title>
        <authorList>
            <person name="Iguchi A."/>
            <person name="Thomson N.R."/>
            <person name="Ogura Y."/>
            <person name="Saunders D."/>
            <person name="Ooka T."/>
            <person name="Henderson I.R."/>
            <person name="Harris D."/>
            <person name="Asadulghani M."/>
            <person name="Kurokawa K."/>
            <person name="Dean P."/>
            <person name="Kenny B."/>
            <person name="Quail M.A."/>
            <person name="Thurston S."/>
            <person name="Dougan G."/>
            <person name="Hayashi T."/>
            <person name="Parkhill J."/>
            <person name="Frankel G."/>
        </authorList>
    </citation>
    <scope>NUCLEOTIDE SEQUENCE [LARGE SCALE GENOMIC DNA]</scope>
    <source>
        <strain>E2348/69 / EPEC</strain>
    </source>
</reference>
<dbReference type="EC" id="3.4.13.21" evidence="1"/>
<dbReference type="EMBL" id="FM180568">
    <property type="protein sequence ID" value="CAS11877.1"/>
    <property type="molecule type" value="Genomic_DNA"/>
</dbReference>
<dbReference type="RefSeq" id="WP_000421763.1">
    <property type="nucleotide sequence ID" value="NC_011601.1"/>
</dbReference>
<dbReference type="SMR" id="B7UPH5"/>
<dbReference type="MEROPS" id="S51.001"/>
<dbReference type="GeneID" id="93777874"/>
<dbReference type="KEGG" id="ecg:E2348C_4329"/>
<dbReference type="HOGENOM" id="CLU_071689_0_0_6"/>
<dbReference type="Proteomes" id="UP000008205">
    <property type="component" value="Chromosome"/>
</dbReference>
<dbReference type="GO" id="GO:0005737">
    <property type="term" value="C:cytoplasm"/>
    <property type="evidence" value="ECO:0007669"/>
    <property type="project" value="UniProtKB-SubCell"/>
</dbReference>
<dbReference type="GO" id="GO:0016805">
    <property type="term" value="F:dipeptidase activity"/>
    <property type="evidence" value="ECO:0007669"/>
    <property type="project" value="UniProtKB-UniRule"/>
</dbReference>
<dbReference type="GO" id="GO:0008236">
    <property type="term" value="F:serine-type peptidase activity"/>
    <property type="evidence" value="ECO:0007669"/>
    <property type="project" value="UniProtKB-KW"/>
</dbReference>
<dbReference type="GO" id="GO:0006508">
    <property type="term" value="P:proteolysis"/>
    <property type="evidence" value="ECO:0007669"/>
    <property type="project" value="UniProtKB-UniRule"/>
</dbReference>
<dbReference type="CDD" id="cd03146">
    <property type="entry name" value="GAT1_Peptidase_E"/>
    <property type="match status" value="1"/>
</dbReference>
<dbReference type="FunFam" id="3.40.50.880:FF:000007">
    <property type="entry name" value="Peptidase E"/>
    <property type="match status" value="1"/>
</dbReference>
<dbReference type="Gene3D" id="3.40.50.880">
    <property type="match status" value="1"/>
</dbReference>
<dbReference type="HAMAP" id="MF_00510">
    <property type="entry name" value="Peptidase_E"/>
    <property type="match status" value="1"/>
</dbReference>
<dbReference type="InterPro" id="IPR029062">
    <property type="entry name" value="Class_I_gatase-like"/>
</dbReference>
<dbReference type="InterPro" id="IPR005320">
    <property type="entry name" value="Peptidase_S51"/>
</dbReference>
<dbReference type="InterPro" id="IPR023172">
    <property type="entry name" value="Peptidase_S51_dipeptidase-E"/>
</dbReference>
<dbReference type="NCBIfam" id="NF003642">
    <property type="entry name" value="PRK05282.1"/>
    <property type="match status" value="1"/>
</dbReference>
<dbReference type="PANTHER" id="PTHR20842:SF0">
    <property type="entry name" value="ALPHA-ASPARTYL DIPEPTIDASE"/>
    <property type="match status" value="1"/>
</dbReference>
<dbReference type="PANTHER" id="PTHR20842">
    <property type="entry name" value="PROTEASE S51 ALPHA-ASPARTYL DIPEPTIDASE"/>
    <property type="match status" value="1"/>
</dbReference>
<dbReference type="Pfam" id="PF03575">
    <property type="entry name" value="Peptidase_S51"/>
    <property type="match status" value="1"/>
</dbReference>
<dbReference type="SUPFAM" id="SSF52317">
    <property type="entry name" value="Class I glutamine amidotransferase-like"/>
    <property type="match status" value="1"/>
</dbReference>
<protein>
    <recommendedName>
        <fullName evidence="1">Peptidase E</fullName>
        <ecNumber evidence="1">3.4.13.21</ecNumber>
    </recommendedName>
    <alternativeName>
        <fullName evidence="1">Alpha-aspartyl dipeptidase</fullName>
    </alternativeName>
    <alternativeName>
        <fullName evidence="1">Asp-specific dipeptidase</fullName>
    </alternativeName>
    <alternativeName>
        <fullName evidence="1">Dipeptidase E</fullName>
    </alternativeName>
</protein>
<keyword id="KW-0963">Cytoplasm</keyword>
<keyword id="KW-0224">Dipeptidase</keyword>
<keyword id="KW-0378">Hydrolase</keyword>
<keyword id="KW-0645">Protease</keyword>
<keyword id="KW-1185">Reference proteome</keyword>
<keyword id="KW-0720">Serine protease</keyword>
<proteinExistence type="inferred from homology"/>
<name>PEPE_ECO27</name>
<sequence length="229" mass="24570">MELLLLSNSTLPGKAWLEHALPLIAEQLQGRRSAVFIPFAGVTQTWDDYTAKTAAVLAPLGVSVTGIHSVVDPVAAIENAEIVIVGGGNTFQLLKQCRERGLLAPITDVVKRGALYIGWSAGANLACPTIRTTNDMPIVDPQGFDALNLFPLQINPHFTNALPEGHKGETREQRIRELLVVAPELTIIGLPEGNWITVSKGHATLGGPNTTYVFKAGEEAVPLEAGHRF</sequence>